<gene>
    <name evidence="1" type="primary">lpxA</name>
    <name type="ordered locus">Tola_2099</name>
</gene>
<dbReference type="EC" id="2.3.1.129" evidence="1"/>
<dbReference type="EMBL" id="CP001616">
    <property type="protein sequence ID" value="ACQ93698.1"/>
    <property type="molecule type" value="Genomic_DNA"/>
</dbReference>
<dbReference type="RefSeq" id="WP_015879166.1">
    <property type="nucleotide sequence ID" value="NC_012691.1"/>
</dbReference>
<dbReference type="SMR" id="C4L852"/>
<dbReference type="STRING" id="595494.Tola_2099"/>
<dbReference type="KEGG" id="tau:Tola_2099"/>
<dbReference type="eggNOG" id="COG1043">
    <property type="taxonomic scope" value="Bacteria"/>
</dbReference>
<dbReference type="HOGENOM" id="CLU_061249_0_0_6"/>
<dbReference type="OrthoDB" id="9807278at2"/>
<dbReference type="UniPathway" id="UPA00359">
    <property type="reaction ID" value="UER00477"/>
</dbReference>
<dbReference type="Proteomes" id="UP000009073">
    <property type="component" value="Chromosome"/>
</dbReference>
<dbReference type="GO" id="GO:0005737">
    <property type="term" value="C:cytoplasm"/>
    <property type="evidence" value="ECO:0007669"/>
    <property type="project" value="UniProtKB-SubCell"/>
</dbReference>
<dbReference type="GO" id="GO:0016020">
    <property type="term" value="C:membrane"/>
    <property type="evidence" value="ECO:0007669"/>
    <property type="project" value="GOC"/>
</dbReference>
<dbReference type="GO" id="GO:0008780">
    <property type="term" value="F:acyl-[acyl-carrier-protein]-UDP-N-acetylglucosamine O-acyltransferase activity"/>
    <property type="evidence" value="ECO:0007669"/>
    <property type="project" value="UniProtKB-UniRule"/>
</dbReference>
<dbReference type="GO" id="GO:0009245">
    <property type="term" value="P:lipid A biosynthetic process"/>
    <property type="evidence" value="ECO:0007669"/>
    <property type="project" value="UniProtKB-UniRule"/>
</dbReference>
<dbReference type="CDD" id="cd03351">
    <property type="entry name" value="LbH_UDP-GlcNAc_AT"/>
    <property type="match status" value="1"/>
</dbReference>
<dbReference type="Gene3D" id="2.160.10.10">
    <property type="entry name" value="Hexapeptide repeat proteins"/>
    <property type="match status" value="1"/>
</dbReference>
<dbReference type="Gene3D" id="1.20.1180.10">
    <property type="entry name" value="Udp N-acetylglucosamine O-acyltransferase, C-terminal domain"/>
    <property type="match status" value="1"/>
</dbReference>
<dbReference type="HAMAP" id="MF_00387">
    <property type="entry name" value="LpxA"/>
    <property type="match status" value="1"/>
</dbReference>
<dbReference type="InterPro" id="IPR029098">
    <property type="entry name" value="Acetyltransf_C"/>
</dbReference>
<dbReference type="InterPro" id="IPR037157">
    <property type="entry name" value="Acetyltransf_C_sf"/>
</dbReference>
<dbReference type="InterPro" id="IPR001451">
    <property type="entry name" value="Hexapep"/>
</dbReference>
<dbReference type="InterPro" id="IPR010137">
    <property type="entry name" value="Lipid_A_LpxA"/>
</dbReference>
<dbReference type="InterPro" id="IPR011004">
    <property type="entry name" value="Trimer_LpxA-like_sf"/>
</dbReference>
<dbReference type="NCBIfam" id="TIGR01852">
    <property type="entry name" value="lipid_A_lpxA"/>
    <property type="match status" value="1"/>
</dbReference>
<dbReference type="NCBIfam" id="NF003657">
    <property type="entry name" value="PRK05289.1"/>
    <property type="match status" value="1"/>
</dbReference>
<dbReference type="PANTHER" id="PTHR43480">
    <property type="entry name" value="ACYL-[ACYL-CARRIER-PROTEIN]--UDP-N-ACETYLGLUCOSAMINE O-ACYLTRANSFERASE"/>
    <property type="match status" value="1"/>
</dbReference>
<dbReference type="PANTHER" id="PTHR43480:SF1">
    <property type="entry name" value="ACYL-[ACYL-CARRIER-PROTEIN]--UDP-N-ACETYLGLUCOSAMINE O-ACYLTRANSFERASE, MITOCHONDRIAL-RELATED"/>
    <property type="match status" value="1"/>
</dbReference>
<dbReference type="Pfam" id="PF13720">
    <property type="entry name" value="Acetyltransf_11"/>
    <property type="match status" value="1"/>
</dbReference>
<dbReference type="Pfam" id="PF00132">
    <property type="entry name" value="Hexapep"/>
    <property type="match status" value="1"/>
</dbReference>
<dbReference type="PIRSF" id="PIRSF000456">
    <property type="entry name" value="UDP-GlcNAc_acltr"/>
    <property type="match status" value="1"/>
</dbReference>
<dbReference type="SUPFAM" id="SSF51161">
    <property type="entry name" value="Trimeric LpxA-like enzymes"/>
    <property type="match status" value="1"/>
</dbReference>
<protein>
    <recommendedName>
        <fullName evidence="1">Acyl-[acyl-carrier-protein]--UDP-N-acetylglucosamine O-acyltransferase</fullName>
        <shortName evidence="1">UDP-N-acetylglucosamine acyltransferase</shortName>
        <ecNumber evidence="1">2.3.1.129</ecNumber>
    </recommendedName>
</protein>
<accession>C4L852</accession>
<name>LPXA_TOLAT</name>
<keyword id="KW-0012">Acyltransferase</keyword>
<keyword id="KW-0963">Cytoplasm</keyword>
<keyword id="KW-0441">Lipid A biosynthesis</keyword>
<keyword id="KW-0444">Lipid biosynthesis</keyword>
<keyword id="KW-0443">Lipid metabolism</keyword>
<keyword id="KW-1185">Reference proteome</keyword>
<keyword id="KW-0677">Repeat</keyword>
<keyword id="KW-0808">Transferase</keyword>
<evidence type="ECO:0000255" key="1">
    <source>
        <dbReference type="HAMAP-Rule" id="MF_00387"/>
    </source>
</evidence>
<feature type="chain" id="PRO_1000205800" description="Acyl-[acyl-carrier-protein]--UDP-N-acetylglucosamine O-acyltransferase">
    <location>
        <begin position="1"/>
        <end position="263"/>
    </location>
</feature>
<comment type="function">
    <text evidence="1">Involved in the biosynthesis of lipid A, a phosphorylated glycolipid that anchors the lipopolysaccharide to the outer membrane of the cell.</text>
</comment>
<comment type="catalytic activity">
    <reaction evidence="1">
        <text>a (3R)-hydroxyacyl-[ACP] + UDP-N-acetyl-alpha-D-glucosamine = a UDP-3-O-[(3R)-3-hydroxyacyl]-N-acetyl-alpha-D-glucosamine + holo-[ACP]</text>
        <dbReference type="Rhea" id="RHEA:67812"/>
        <dbReference type="Rhea" id="RHEA-COMP:9685"/>
        <dbReference type="Rhea" id="RHEA-COMP:9945"/>
        <dbReference type="ChEBI" id="CHEBI:57705"/>
        <dbReference type="ChEBI" id="CHEBI:64479"/>
        <dbReference type="ChEBI" id="CHEBI:78827"/>
        <dbReference type="ChEBI" id="CHEBI:173225"/>
        <dbReference type="EC" id="2.3.1.129"/>
    </reaction>
</comment>
<comment type="pathway">
    <text evidence="1">Glycolipid biosynthesis; lipid IV(A) biosynthesis; lipid IV(A) from (3R)-3-hydroxytetradecanoyl-[acyl-carrier-protein] and UDP-N-acetyl-alpha-D-glucosamine: step 1/6.</text>
</comment>
<comment type="subunit">
    <text evidence="1">Homotrimer.</text>
</comment>
<comment type="subcellular location">
    <subcellularLocation>
        <location evidence="1">Cytoplasm</location>
    </subcellularLocation>
</comment>
<comment type="similarity">
    <text evidence="1">Belongs to the transferase hexapeptide repeat family. LpxA subfamily.</text>
</comment>
<proteinExistence type="inferred from homology"/>
<sequence length="263" mass="28658">MIDPSAKIHPSAIIHPNAVIGANVEIGAFTCVEDEVEIGEGTWVGSHVLIKGPTKIGRNNKIFQFSSIGEDCQDKKYAGERTFLEIGDANVIREHCTFHRGTVQDQSLTKVGSRNLFMVNVHVAHDCMIGDDCIFANNATLAGHVHIGDWVIFGGLAAIHQFGRVGSHAFIAGMAALNKDVPPYVMAAGHYATPFGINSEGLRRRGFSAEAISAVKRAYKELYRSGKTIDEVMPVLETMAQDEPAVALFVEFLKKNERGIIRP</sequence>
<reference key="1">
    <citation type="submission" date="2009-05" db="EMBL/GenBank/DDBJ databases">
        <title>Complete sequence of Tolumonas auensis DSM 9187.</title>
        <authorList>
            <consortium name="US DOE Joint Genome Institute"/>
            <person name="Lucas S."/>
            <person name="Copeland A."/>
            <person name="Lapidus A."/>
            <person name="Glavina del Rio T."/>
            <person name="Tice H."/>
            <person name="Bruce D."/>
            <person name="Goodwin L."/>
            <person name="Pitluck S."/>
            <person name="Chertkov O."/>
            <person name="Brettin T."/>
            <person name="Detter J.C."/>
            <person name="Han C."/>
            <person name="Larimer F."/>
            <person name="Land M."/>
            <person name="Hauser L."/>
            <person name="Kyrpides N."/>
            <person name="Mikhailova N."/>
            <person name="Spring S."/>
            <person name="Beller H."/>
        </authorList>
    </citation>
    <scope>NUCLEOTIDE SEQUENCE [LARGE SCALE GENOMIC DNA]</scope>
    <source>
        <strain>DSM 9187 / NBRC 110442 / TA 4</strain>
    </source>
</reference>
<organism>
    <name type="scientific">Tolumonas auensis (strain DSM 9187 / NBRC 110442 / TA 4)</name>
    <dbReference type="NCBI Taxonomy" id="595494"/>
    <lineage>
        <taxon>Bacteria</taxon>
        <taxon>Pseudomonadati</taxon>
        <taxon>Pseudomonadota</taxon>
        <taxon>Gammaproteobacteria</taxon>
        <taxon>Aeromonadales</taxon>
        <taxon>Aeromonadaceae</taxon>
        <taxon>Tolumonas</taxon>
    </lineage>
</organism>